<gene>
    <name evidence="1" type="primary">mraY</name>
    <name type="ordered locus">Bcav_2413</name>
</gene>
<dbReference type="EC" id="2.7.8.13" evidence="1"/>
<dbReference type="EMBL" id="CP001618">
    <property type="protein sequence ID" value="ACQ80663.1"/>
    <property type="molecule type" value="Genomic_DNA"/>
</dbReference>
<dbReference type="RefSeq" id="WP_015882903.1">
    <property type="nucleotide sequence ID" value="NC_012669.1"/>
</dbReference>
<dbReference type="SMR" id="C5BW62"/>
<dbReference type="STRING" id="471853.Bcav_2413"/>
<dbReference type="KEGG" id="bcv:Bcav_2413"/>
<dbReference type="eggNOG" id="COG0472">
    <property type="taxonomic scope" value="Bacteria"/>
</dbReference>
<dbReference type="HOGENOM" id="CLU_023982_0_1_11"/>
<dbReference type="OrthoDB" id="9805475at2"/>
<dbReference type="UniPathway" id="UPA00219"/>
<dbReference type="Proteomes" id="UP000007962">
    <property type="component" value="Chromosome"/>
</dbReference>
<dbReference type="GO" id="GO:0005886">
    <property type="term" value="C:plasma membrane"/>
    <property type="evidence" value="ECO:0007669"/>
    <property type="project" value="UniProtKB-SubCell"/>
</dbReference>
<dbReference type="GO" id="GO:0046872">
    <property type="term" value="F:metal ion binding"/>
    <property type="evidence" value="ECO:0007669"/>
    <property type="project" value="UniProtKB-KW"/>
</dbReference>
<dbReference type="GO" id="GO:0008963">
    <property type="term" value="F:phospho-N-acetylmuramoyl-pentapeptide-transferase activity"/>
    <property type="evidence" value="ECO:0007669"/>
    <property type="project" value="UniProtKB-UniRule"/>
</dbReference>
<dbReference type="GO" id="GO:0051992">
    <property type="term" value="F:UDP-N-acetylmuramoyl-L-alanyl-D-glutamyl-meso-2,6-diaminopimelyl-D-alanyl-D-alanine:undecaprenyl-phosphate transferase activity"/>
    <property type="evidence" value="ECO:0007669"/>
    <property type="project" value="RHEA"/>
</dbReference>
<dbReference type="GO" id="GO:0051301">
    <property type="term" value="P:cell division"/>
    <property type="evidence" value="ECO:0007669"/>
    <property type="project" value="UniProtKB-KW"/>
</dbReference>
<dbReference type="GO" id="GO:0071555">
    <property type="term" value="P:cell wall organization"/>
    <property type="evidence" value="ECO:0007669"/>
    <property type="project" value="UniProtKB-KW"/>
</dbReference>
<dbReference type="GO" id="GO:0009252">
    <property type="term" value="P:peptidoglycan biosynthetic process"/>
    <property type="evidence" value="ECO:0007669"/>
    <property type="project" value="UniProtKB-UniRule"/>
</dbReference>
<dbReference type="GO" id="GO:0008360">
    <property type="term" value="P:regulation of cell shape"/>
    <property type="evidence" value="ECO:0007669"/>
    <property type="project" value="UniProtKB-KW"/>
</dbReference>
<dbReference type="CDD" id="cd06852">
    <property type="entry name" value="GT_MraY"/>
    <property type="match status" value="1"/>
</dbReference>
<dbReference type="HAMAP" id="MF_00038">
    <property type="entry name" value="MraY"/>
    <property type="match status" value="1"/>
</dbReference>
<dbReference type="InterPro" id="IPR000715">
    <property type="entry name" value="Glycosyl_transferase_4"/>
</dbReference>
<dbReference type="InterPro" id="IPR003524">
    <property type="entry name" value="PNAcMuramoyl-5peptid_Trfase"/>
</dbReference>
<dbReference type="InterPro" id="IPR018480">
    <property type="entry name" value="PNAcMuramoyl-5peptid_Trfase_CS"/>
</dbReference>
<dbReference type="NCBIfam" id="TIGR00445">
    <property type="entry name" value="mraY"/>
    <property type="match status" value="1"/>
</dbReference>
<dbReference type="PANTHER" id="PTHR22926">
    <property type="entry name" value="PHOSPHO-N-ACETYLMURAMOYL-PENTAPEPTIDE-TRANSFERASE"/>
    <property type="match status" value="1"/>
</dbReference>
<dbReference type="PANTHER" id="PTHR22926:SF5">
    <property type="entry name" value="PHOSPHO-N-ACETYLMURAMOYL-PENTAPEPTIDE-TRANSFERASE HOMOLOG"/>
    <property type="match status" value="1"/>
</dbReference>
<dbReference type="Pfam" id="PF00953">
    <property type="entry name" value="Glycos_transf_4"/>
    <property type="match status" value="1"/>
</dbReference>
<dbReference type="Pfam" id="PF10555">
    <property type="entry name" value="MraY_sig1"/>
    <property type="match status" value="1"/>
</dbReference>
<dbReference type="PROSITE" id="PS01347">
    <property type="entry name" value="MRAY_1"/>
    <property type="match status" value="1"/>
</dbReference>
<dbReference type="PROSITE" id="PS01348">
    <property type="entry name" value="MRAY_2"/>
    <property type="match status" value="1"/>
</dbReference>
<name>MRAY_BEUC1</name>
<reference key="1">
    <citation type="journal article" date="2009" name="Stand. Genomic Sci.">
        <title>Complete genome sequence of Beutenbergia cavernae type strain (HKI 0122).</title>
        <authorList>
            <person name="Land M."/>
            <person name="Pukall R."/>
            <person name="Abt B."/>
            <person name="Goker M."/>
            <person name="Rohde M."/>
            <person name="Glavina Del Rio T."/>
            <person name="Tice H."/>
            <person name="Copeland A."/>
            <person name="Cheng J.F."/>
            <person name="Lucas S."/>
            <person name="Chen F."/>
            <person name="Nolan M."/>
            <person name="Bruce D."/>
            <person name="Goodwin L."/>
            <person name="Pitluck S."/>
            <person name="Ivanova N."/>
            <person name="Mavromatis K."/>
            <person name="Ovchinnikova G."/>
            <person name="Pati A."/>
            <person name="Chen A."/>
            <person name="Palaniappan K."/>
            <person name="Hauser L."/>
            <person name="Chang Y.J."/>
            <person name="Jefferies C.C."/>
            <person name="Saunders E."/>
            <person name="Brettin T."/>
            <person name="Detter J.C."/>
            <person name="Han C."/>
            <person name="Chain P."/>
            <person name="Bristow J."/>
            <person name="Eisen J.A."/>
            <person name="Markowitz V."/>
            <person name="Hugenholtz P."/>
            <person name="Kyrpides N.C."/>
            <person name="Klenk H.P."/>
            <person name="Lapidus A."/>
        </authorList>
    </citation>
    <scope>NUCLEOTIDE SEQUENCE [LARGE SCALE GENOMIC DNA]</scope>
    <source>
        <strain>ATCC BAA-8 / DSM 12333 / CCUG 43141 / JCM 11478 / NBRC 16432 / NCIMB 13614 / HKI 0122</strain>
    </source>
</reference>
<feature type="chain" id="PRO_1000202060" description="Phospho-N-acetylmuramoyl-pentapeptide-transferase">
    <location>
        <begin position="1"/>
        <end position="360"/>
    </location>
</feature>
<feature type="transmembrane region" description="Helical" evidence="1">
    <location>
        <begin position="2"/>
        <end position="22"/>
    </location>
</feature>
<feature type="transmembrane region" description="Helical" evidence="1">
    <location>
        <begin position="52"/>
        <end position="72"/>
    </location>
</feature>
<feature type="transmembrane region" description="Helical" evidence="1">
    <location>
        <begin position="80"/>
        <end position="100"/>
    </location>
</feature>
<feature type="transmembrane region" description="Helical" evidence="1">
    <location>
        <begin position="114"/>
        <end position="134"/>
    </location>
</feature>
<feature type="transmembrane region" description="Helical" evidence="1">
    <location>
        <begin position="156"/>
        <end position="176"/>
    </location>
</feature>
<feature type="transmembrane region" description="Helical" evidence="1">
    <location>
        <begin position="189"/>
        <end position="209"/>
    </location>
</feature>
<feature type="transmembrane region" description="Helical" evidence="1">
    <location>
        <begin position="235"/>
        <end position="255"/>
    </location>
</feature>
<feature type="transmembrane region" description="Helical" evidence="1">
    <location>
        <begin position="259"/>
        <end position="279"/>
    </location>
</feature>
<feature type="transmembrane region" description="Helical" evidence="1">
    <location>
        <begin position="284"/>
        <end position="304"/>
    </location>
</feature>
<feature type="transmembrane region" description="Helical" evidence="1">
    <location>
        <begin position="338"/>
        <end position="358"/>
    </location>
</feature>
<protein>
    <recommendedName>
        <fullName evidence="1">Phospho-N-acetylmuramoyl-pentapeptide-transferase</fullName>
        <ecNumber evidence="1">2.7.8.13</ecNumber>
    </recommendedName>
    <alternativeName>
        <fullName evidence="1">UDP-MurNAc-pentapeptide phosphotransferase</fullName>
    </alternativeName>
</protein>
<accession>C5BW62</accession>
<sequence length="360" mass="38857">MIAILVSGAVGLLVSLFGTPLFIRFLVKRQYGQFIRQDGPTAHFTKRGTPTMGGVVIIAATVLGYTVANISAQRMPQVSGLLLLFLMIGLGVIGFLDDFIKISRQRSLGLNARWKIIGQGVIGVTFSVLALQFPNEQFRTPASTQVSFIRDTGIDLAFAGAAVGLVLFVIWANFLITAWSNAVNLTDGLDGLATGVSVFVFSAYVVVTMWQSNQSCQVLSQVGPSCYETRDPRDLAIVTAAIVGACAGFLWWNASPAKIFMGDTGALALGGALAGLSILTRTEFLAVIIGGLFVVIVLSDVIQIGFFKMTRRRVFKMAPLHHHFELSGWNEVTIVIRFWLIAALFVALGVGIFYAEWVVG</sequence>
<comment type="function">
    <text evidence="1">Catalyzes the initial step of the lipid cycle reactions in the biosynthesis of the cell wall peptidoglycan: transfers peptidoglycan precursor phospho-MurNAc-pentapeptide from UDP-MurNAc-pentapeptide onto the lipid carrier undecaprenyl phosphate, yielding undecaprenyl-pyrophosphoryl-MurNAc-pentapeptide, known as lipid I.</text>
</comment>
<comment type="catalytic activity">
    <reaction evidence="1">
        <text>UDP-N-acetyl-alpha-D-muramoyl-L-alanyl-gamma-D-glutamyl-meso-2,6-diaminopimeloyl-D-alanyl-D-alanine + di-trans,octa-cis-undecaprenyl phosphate = di-trans,octa-cis-undecaprenyl diphospho-N-acetyl-alpha-D-muramoyl-L-alanyl-D-glutamyl-meso-2,6-diaminopimeloyl-D-alanyl-D-alanine + UMP</text>
        <dbReference type="Rhea" id="RHEA:28386"/>
        <dbReference type="ChEBI" id="CHEBI:57865"/>
        <dbReference type="ChEBI" id="CHEBI:60392"/>
        <dbReference type="ChEBI" id="CHEBI:61386"/>
        <dbReference type="ChEBI" id="CHEBI:61387"/>
        <dbReference type="EC" id="2.7.8.13"/>
    </reaction>
</comment>
<comment type="cofactor">
    <cofactor evidence="1">
        <name>Mg(2+)</name>
        <dbReference type="ChEBI" id="CHEBI:18420"/>
    </cofactor>
</comment>
<comment type="pathway">
    <text evidence="1">Cell wall biogenesis; peptidoglycan biosynthesis.</text>
</comment>
<comment type="subcellular location">
    <subcellularLocation>
        <location evidence="1">Cell membrane</location>
        <topology evidence="1">Multi-pass membrane protein</topology>
    </subcellularLocation>
</comment>
<comment type="similarity">
    <text evidence="1">Belongs to the glycosyltransferase 4 family. MraY subfamily.</text>
</comment>
<keyword id="KW-0131">Cell cycle</keyword>
<keyword id="KW-0132">Cell division</keyword>
<keyword id="KW-1003">Cell membrane</keyword>
<keyword id="KW-0133">Cell shape</keyword>
<keyword id="KW-0961">Cell wall biogenesis/degradation</keyword>
<keyword id="KW-0460">Magnesium</keyword>
<keyword id="KW-0472">Membrane</keyword>
<keyword id="KW-0479">Metal-binding</keyword>
<keyword id="KW-0573">Peptidoglycan synthesis</keyword>
<keyword id="KW-1185">Reference proteome</keyword>
<keyword id="KW-0808">Transferase</keyword>
<keyword id="KW-0812">Transmembrane</keyword>
<keyword id="KW-1133">Transmembrane helix</keyword>
<proteinExistence type="inferred from homology"/>
<evidence type="ECO:0000255" key="1">
    <source>
        <dbReference type="HAMAP-Rule" id="MF_00038"/>
    </source>
</evidence>
<organism>
    <name type="scientific">Beutenbergia cavernae (strain ATCC BAA-8 / DSM 12333 / CCUG 43141 / JCM 11478 / NBRC 16432 / NCIMB 13614 / HKI 0122)</name>
    <dbReference type="NCBI Taxonomy" id="471853"/>
    <lineage>
        <taxon>Bacteria</taxon>
        <taxon>Bacillati</taxon>
        <taxon>Actinomycetota</taxon>
        <taxon>Actinomycetes</taxon>
        <taxon>Micrococcales</taxon>
        <taxon>Beutenbergiaceae</taxon>
        <taxon>Beutenbergia</taxon>
    </lineage>
</organism>